<sequence length="466" mass="52074">MSVVPVVDVLQGRAAVGSEVTVRGWVRTRRDSKAGISFVAVYDGSCFDPLQAVVNNTLPNYQDEVLHLTTGCSVEVTGTVVASPGEGQSFEIQATAINVVGWVDDPDTYPMAAKRHSIEYLREVAHLRPRTNLIGAVARVRHTLAQAIHRFFDENGYFWVSTPLITASDTEGAGEMFRVSTLDLENLPRTDTGAVDFSEDFFGKEAFLTVSGQLNGETYACALSKVYTFGPTFRAENSNTSRHLAEFWMVEPEVAFASLDDVAGLAEKMLKYVFQAVLNERADDMKFFAERVDKDAVDRLQRFVTSDFAQVDYTDAIEILLASGQKFENDVSWGIDLSSEHERYLAEKHFKAPVVVKNYPKDIKAFYMRMNEDGKTVAAMDVLAPGIGEIIGGSQREERLDVLDARLAEMGLNKEDYWWYRDLRRYGTVPHSGFGLGFERLISYVTGVQNVRDVIPFPRTPRNASF</sequence>
<dbReference type="EC" id="6.1.1.22" evidence="1"/>
<dbReference type="EMBL" id="AL590842">
    <property type="protein sequence ID" value="CAL20064.1"/>
    <property type="molecule type" value="Genomic_DNA"/>
</dbReference>
<dbReference type="EMBL" id="AE009952">
    <property type="protein sequence ID" value="AAM86310.1"/>
    <property type="molecule type" value="Genomic_DNA"/>
</dbReference>
<dbReference type="EMBL" id="AE017042">
    <property type="protein sequence ID" value="AAS61424.1"/>
    <property type="molecule type" value="Genomic_DNA"/>
</dbReference>
<dbReference type="PIR" id="AF0172">
    <property type="entry name" value="AF0172"/>
</dbReference>
<dbReference type="RefSeq" id="WP_002211301.1">
    <property type="nucleotide sequence ID" value="NZ_WUCM01000086.1"/>
</dbReference>
<dbReference type="RefSeq" id="YP_002346435.1">
    <property type="nucleotide sequence ID" value="NC_003143.1"/>
</dbReference>
<dbReference type="SMR" id="P58697"/>
<dbReference type="STRING" id="214092.YPO1412"/>
<dbReference type="PaxDb" id="214092-YPO1412"/>
<dbReference type="EnsemblBacteria" id="AAS61424">
    <property type="protein sequence ID" value="AAS61424"/>
    <property type="gene ID" value="YP_1181"/>
</dbReference>
<dbReference type="GeneID" id="96665013"/>
<dbReference type="KEGG" id="ype:YPO1412"/>
<dbReference type="KEGG" id="ypk:y2758"/>
<dbReference type="KEGG" id="ypm:YP_1181"/>
<dbReference type="PATRIC" id="fig|214092.21.peg.1739"/>
<dbReference type="eggNOG" id="COG0017">
    <property type="taxonomic scope" value="Bacteria"/>
</dbReference>
<dbReference type="HOGENOM" id="CLU_004553_2_0_6"/>
<dbReference type="OMA" id="PEMAFYD"/>
<dbReference type="OrthoDB" id="9762036at2"/>
<dbReference type="Proteomes" id="UP000000815">
    <property type="component" value="Chromosome"/>
</dbReference>
<dbReference type="Proteomes" id="UP000001019">
    <property type="component" value="Chromosome"/>
</dbReference>
<dbReference type="Proteomes" id="UP000002490">
    <property type="component" value="Chromosome"/>
</dbReference>
<dbReference type="GO" id="GO:0005737">
    <property type="term" value="C:cytoplasm"/>
    <property type="evidence" value="ECO:0007669"/>
    <property type="project" value="UniProtKB-SubCell"/>
</dbReference>
<dbReference type="GO" id="GO:0004816">
    <property type="term" value="F:asparagine-tRNA ligase activity"/>
    <property type="evidence" value="ECO:0007669"/>
    <property type="project" value="UniProtKB-UniRule"/>
</dbReference>
<dbReference type="GO" id="GO:0005524">
    <property type="term" value="F:ATP binding"/>
    <property type="evidence" value="ECO:0007669"/>
    <property type="project" value="UniProtKB-UniRule"/>
</dbReference>
<dbReference type="GO" id="GO:0003676">
    <property type="term" value="F:nucleic acid binding"/>
    <property type="evidence" value="ECO:0007669"/>
    <property type="project" value="InterPro"/>
</dbReference>
<dbReference type="GO" id="GO:0006421">
    <property type="term" value="P:asparaginyl-tRNA aminoacylation"/>
    <property type="evidence" value="ECO:0000318"/>
    <property type="project" value="GO_Central"/>
</dbReference>
<dbReference type="CDD" id="cd00776">
    <property type="entry name" value="AsxRS_core"/>
    <property type="match status" value="1"/>
</dbReference>
<dbReference type="CDD" id="cd04318">
    <property type="entry name" value="EcAsnRS_like_N"/>
    <property type="match status" value="1"/>
</dbReference>
<dbReference type="FunFam" id="3.30.930.10:FF:000016">
    <property type="entry name" value="Asparagine--tRNA ligase"/>
    <property type="match status" value="1"/>
</dbReference>
<dbReference type="Gene3D" id="3.30.930.10">
    <property type="entry name" value="Bira Bifunctional Protein, Domain 2"/>
    <property type="match status" value="1"/>
</dbReference>
<dbReference type="Gene3D" id="2.40.50.140">
    <property type="entry name" value="Nucleic acid-binding proteins"/>
    <property type="match status" value="1"/>
</dbReference>
<dbReference type="HAMAP" id="MF_00534">
    <property type="entry name" value="Asn_tRNA_synth"/>
    <property type="match status" value="1"/>
</dbReference>
<dbReference type="InterPro" id="IPR004364">
    <property type="entry name" value="Aa-tRNA-synt_II"/>
</dbReference>
<dbReference type="InterPro" id="IPR006195">
    <property type="entry name" value="aa-tRNA-synth_II"/>
</dbReference>
<dbReference type="InterPro" id="IPR045864">
    <property type="entry name" value="aa-tRNA-synth_II/BPL/LPL"/>
</dbReference>
<dbReference type="InterPro" id="IPR004522">
    <property type="entry name" value="Asn-tRNA-ligase"/>
</dbReference>
<dbReference type="InterPro" id="IPR002312">
    <property type="entry name" value="Asp/Asn-tRNA-synth_IIb"/>
</dbReference>
<dbReference type="InterPro" id="IPR012340">
    <property type="entry name" value="NA-bd_OB-fold"/>
</dbReference>
<dbReference type="InterPro" id="IPR004365">
    <property type="entry name" value="NA-bd_OB_tRNA"/>
</dbReference>
<dbReference type="NCBIfam" id="TIGR00457">
    <property type="entry name" value="asnS"/>
    <property type="match status" value="1"/>
</dbReference>
<dbReference type="NCBIfam" id="NF003037">
    <property type="entry name" value="PRK03932.1"/>
    <property type="match status" value="1"/>
</dbReference>
<dbReference type="PANTHER" id="PTHR22594:SF34">
    <property type="entry name" value="ASPARAGINE--TRNA LIGASE, MITOCHONDRIAL-RELATED"/>
    <property type="match status" value="1"/>
</dbReference>
<dbReference type="PANTHER" id="PTHR22594">
    <property type="entry name" value="ASPARTYL/LYSYL-TRNA SYNTHETASE"/>
    <property type="match status" value="1"/>
</dbReference>
<dbReference type="Pfam" id="PF00152">
    <property type="entry name" value="tRNA-synt_2"/>
    <property type="match status" value="1"/>
</dbReference>
<dbReference type="Pfam" id="PF01336">
    <property type="entry name" value="tRNA_anti-codon"/>
    <property type="match status" value="1"/>
</dbReference>
<dbReference type="PRINTS" id="PR01042">
    <property type="entry name" value="TRNASYNTHASP"/>
</dbReference>
<dbReference type="SUPFAM" id="SSF55681">
    <property type="entry name" value="Class II aaRS and biotin synthetases"/>
    <property type="match status" value="1"/>
</dbReference>
<dbReference type="SUPFAM" id="SSF50249">
    <property type="entry name" value="Nucleic acid-binding proteins"/>
    <property type="match status" value="1"/>
</dbReference>
<dbReference type="PROSITE" id="PS50862">
    <property type="entry name" value="AA_TRNA_LIGASE_II"/>
    <property type="match status" value="1"/>
</dbReference>
<proteinExistence type="inferred from homology"/>
<keyword id="KW-0030">Aminoacyl-tRNA synthetase</keyword>
<keyword id="KW-0067">ATP-binding</keyword>
<keyword id="KW-0963">Cytoplasm</keyword>
<keyword id="KW-0436">Ligase</keyword>
<keyword id="KW-0547">Nucleotide-binding</keyword>
<keyword id="KW-0648">Protein biosynthesis</keyword>
<keyword id="KW-1185">Reference proteome</keyword>
<organism>
    <name type="scientific">Yersinia pestis</name>
    <dbReference type="NCBI Taxonomy" id="632"/>
    <lineage>
        <taxon>Bacteria</taxon>
        <taxon>Pseudomonadati</taxon>
        <taxon>Pseudomonadota</taxon>
        <taxon>Gammaproteobacteria</taxon>
        <taxon>Enterobacterales</taxon>
        <taxon>Yersiniaceae</taxon>
        <taxon>Yersinia</taxon>
    </lineage>
</organism>
<feature type="chain" id="PRO_0000176483" description="Asparagine--tRNA ligase">
    <location>
        <begin position="1"/>
        <end position="466"/>
    </location>
</feature>
<evidence type="ECO:0000255" key="1">
    <source>
        <dbReference type="HAMAP-Rule" id="MF_00534"/>
    </source>
</evidence>
<accession>P58697</accession>
<accession>Q0WH03</accession>
<gene>
    <name evidence="1" type="primary">asnS</name>
    <name type="ordered locus">YPO1412</name>
    <name type="ordered locus">y2758</name>
    <name type="ordered locus">YP_1181</name>
</gene>
<protein>
    <recommendedName>
        <fullName evidence="1">Asparagine--tRNA ligase</fullName>
        <ecNumber evidence="1">6.1.1.22</ecNumber>
    </recommendedName>
    <alternativeName>
        <fullName evidence="1">Asparaginyl-tRNA synthetase</fullName>
        <shortName evidence="1">AsnRS</shortName>
    </alternativeName>
</protein>
<comment type="catalytic activity">
    <reaction evidence="1">
        <text>tRNA(Asn) + L-asparagine + ATP = L-asparaginyl-tRNA(Asn) + AMP + diphosphate + H(+)</text>
        <dbReference type="Rhea" id="RHEA:11180"/>
        <dbReference type="Rhea" id="RHEA-COMP:9659"/>
        <dbReference type="Rhea" id="RHEA-COMP:9674"/>
        <dbReference type="ChEBI" id="CHEBI:15378"/>
        <dbReference type="ChEBI" id="CHEBI:30616"/>
        <dbReference type="ChEBI" id="CHEBI:33019"/>
        <dbReference type="ChEBI" id="CHEBI:58048"/>
        <dbReference type="ChEBI" id="CHEBI:78442"/>
        <dbReference type="ChEBI" id="CHEBI:78515"/>
        <dbReference type="ChEBI" id="CHEBI:456215"/>
        <dbReference type="EC" id="6.1.1.22"/>
    </reaction>
</comment>
<comment type="subunit">
    <text evidence="1">Homodimer.</text>
</comment>
<comment type="subcellular location">
    <subcellularLocation>
        <location>Cytoplasm</location>
    </subcellularLocation>
</comment>
<comment type="similarity">
    <text evidence="1">Belongs to the class-II aminoacyl-tRNA synthetase family.</text>
</comment>
<name>SYN_YERPE</name>
<reference key="1">
    <citation type="journal article" date="2001" name="Nature">
        <title>Genome sequence of Yersinia pestis, the causative agent of plague.</title>
        <authorList>
            <person name="Parkhill J."/>
            <person name="Wren B.W."/>
            <person name="Thomson N.R."/>
            <person name="Titball R.W."/>
            <person name="Holden M.T.G."/>
            <person name="Prentice M.B."/>
            <person name="Sebaihia M."/>
            <person name="James K.D."/>
            <person name="Churcher C.M."/>
            <person name="Mungall K.L."/>
            <person name="Baker S."/>
            <person name="Basham D."/>
            <person name="Bentley S.D."/>
            <person name="Brooks K."/>
            <person name="Cerdeno-Tarraga A.-M."/>
            <person name="Chillingworth T."/>
            <person name="Cronin A."/>
            <person name="Davies R.M."/>
            <person name="Davis P."/>
            <person name="Dougan G."/>
            <person name="Feltwell T."/>
            <person name="Hamlin N."/>
            <person name="Holroyd S."/>
            <person name="Jagels K."/>
            <person name="Karlyshev A.V."/>
            <person name="Leather S."/>
            <person name="Moule S."/>
            <person name="Oyston P.C.F."/>
            <person name="Quail M.A."/>
            <person name="Rutherford K.M."/>
            <person name="Simmonds M."/>
            <person name="Skelton J."/>
            <person name="Stevens K."/>
            <person name="Whitehead S."/>
            <person name="Barrell B.G."/>
        </authorList>
    </citation>
    <scope>NUCLEOTIDE SEQUENCE [LARGE SCALE GENOMIC DNA]</scope>
    <source>
        <strain>CO-92 / Biovar Orientalis</strain>
    </source>
</reference>
<reference key="2">
    <citation type="journal article" date="2002" name="J. Bacteriol.">
        <title>Genome sequence of Yersinia pestis KIM.</title>
        <authorList>
            <person name="Deng W."/>
            <person name="Burland V."/>
            <person name="Plunkett G. III"/>
            <person name="Boutin A."/>
            <person name="Mayhew G.F."/>
            <person name="Liss P."/>
            <person name="Perna N.T."/>
            <person name="Rose D.J."/>
            <person name="Mau B."/>
            <person name="Zhou S."/>
            <person name="Schwartz D.C."/>
            <person name="Fetherston J.D."/>
            <person name="Lindler L.E."/>
            <person name="Brubaker R.R."/>
            <person name="Plano G.V."/>
            <person name="Straley S.C."/>
            <person name="McDonough K.A."/>
            <person name="Nilles M.L."/>
            <person name="Matson J.S."/>
            <person name="Blattner F.R."/>
            <person name="Perry R.D."/>
        </authorList>
    </citation>
    <scope>NUCLEOTIDE SEQUENCE [LARGE SCALE GENOMIC DNA]</scope>
    <source>
        <strain>KIM10+ / Biovar Mediaevalis</strain>
    </source>
</reference>
<reference key="3">
    <citation type="journal article" date="2004" name="DNA Res.">
        <title>Complete genome sequence of Yersinia pestis strain 91001, an isolate avirulent to humans.</title>
        <authorList>
            <person name="Song Y."/>
            <person name="Tong Z."/>
            <person name="Wang J."/>
            <person name="Wang L."/>
            <person name="Guo Z."/>
            <person name="Han Y."/>
            <person name="Zhang J."/>
            <person name="Pei D."/>
            <person name="Zhou D."/>
            <person name="Qin H."/>
            <person name="Pang X."/>
            <person name="Han Y."/>
            <person name="Zhai J."/>
            <person name="Li M."/>
            <person name="Cui B."/>
            <person name="Qi Z."/>
            <person name="Jin L."/>
            <person name="Dai R."/>
            <person name="Chen F."/>
            <person name="Li S."/>
            <person name="Ye C."/>
            <person name="Du Z."/>
            <person name="Lin W."/>
            <person name="Wang J."/>
            <person name="Yu J."/>
            <person name="Yang H."/>
            <person name="Wang J."/>
            <person name="Huang P."/>
            <person name="Yang R."/>
        </authorList>
    </citation>
    <scope>NUCLEOTIDE SEQUENCE [LARGE SCALE GENOMIC DNA]</scope>
    <source>
        <strain>91001 / Biovar Mediaevalis</strain>
    </source>
</reference>